<protein>
    <recommendedName>
        <fullName>Cadherin-11</fullName>
    </recommendedName>
    <alternativeName>
        <fullName>OSF-4</fullName>
    </alternativeName>
    <alternativeName>
        <fullName>Osteoblast cadherin</fullName>
        <shortName>OB-cadherin</shortName>
    </alternativeName>
</protein>
<evidence type="ECO:0000250" key="1"/>
<evidence type="ECO:0000250" key="2">
    <source>
        <dbReference type="UniProtKB" id="P55287"/>
    </source>
</evidence>
<evidence type="ECO:0000255" key="3"/>
<evidence type="ECO:0000255" key="4">
    <source>
        <dbReference type="PROSITE-ProRule" id="PRU00043"/>
    </source>
</evidence>
<evidence type="ECO:0000269" key="5">
    <source>
    </source>
</evidence>
<evidence type="ECO:0000305" key="6"/>
<evidence type="ECO:0007744" key="7">
    <source>
    </source>
</evidence>
<evidence type="ECO:0007829" key="8">
    <source>
        <dbReference type="PDB" id="2A4C"/>
    </source>
</evidence>
<evidence type="ECO:0007829" key="9">
    <source>
        <dbReference type="PDB" id="2A4E"/>
    </source>
</evidence>
<comment type="function">
    <text evidence="2">Cadherins are calcium-dependent cell adhesion proteins. They preferentially interact with themselves in a homophilic manner in connecting cells; cadherins may thus contribute to the sorting of heterogeneous cell types. Required for proper focal adhesion assembly. Involved in the regulation of cell migration.</text>
</comment>
<comment type="subunit">
    <text evidence="1">Interacts with PCDH8.</text>
</comment>
<comment type="subcellular location">
    <subcellularLocation>
        <location>Cell membrane</location>
        <topology>Single-pass type I membrane protein</topology>
    </subcellularLocation>
</comment>
<comment type="tissue specificity">
    <text>Selectively expressed in osteoblastic cell lines, precursor cell lines of osteoblasts, and primary osteoblastic cells from calvaria, as well as in lung, testis, and brain tissues at low levels.</text>
</comment>
<comment type="developmental stage">
    <text evidence="5">In the testis, expression is highest in fetal gonad and decreases 8-fold in newborn.</text>
</comment>
<comment type="domain">
    <text evidence="1">Three calcium ions are usually bound at the interface of each cadherin domain and rigidify the connections, imparting a strong curvature to the full-length ectodomain.</text>
</comment>
<name>CAD11_MOUSE</name>
<organism>
    <name type="scientific">Mus musculus</name>
    <name type="common">Mouse</name>
    <dbReference type="NCBI Taxonomy" id="10090"/>
    <lineage>
        <taxon>Eukaryota</taxon>
        <taxon>Metazoa</taxon>
        <taxon>Chordata</taxon>
        <taxon>Craniata</taxon>
        <taxon>Vertebrata</taxon>
        <taxon>Euteleostomi</taxon>
        <taxon>Mammalia</taxon>
        <taxon>Eutheria</taxon>
        <taxon>Euarchontoglires</taxon>
        <taxon>Glires</taxon>
        <taxon>Rodentia</taxon>
        <taxon>Myomorpha</taxon>
        <taxon>Muroidea</taxon>
        <taxon>Muridae</taxon>
        <taxon>Murinae</taxon>
        <taxon>Mus</taxon>
        <taxon>Mus</taxon>
    </lineage>
</organism>
<feature type="signal peptide" evidence="3">
    <location>
        <begin position="1"/>
        <end position="24"/>
    </location>
</feature>
<feature type="propeptide" id="PRO_0000003787" evidence="3">
    <location>
        <begin position="25"/>
        <end position="53"/>
    </location>
</feature>
<feature type="chain" id="PRO_0000003788" description="Cadherin-11">
    <location>
        <begin position="54"/>
        <end position="796"/>
    </location>
</feature>
<feature type="topological domain" description="Extracellular" evidence="3">
    <location>
        <begin position="54"/>
        <end position="617"/>
    </location>
</feature>
<feature type="transmembrane region" description="Helical" evidence="3">
    <location>
        <begin position="618"/>
        <end position="640"/>
    </location>
</feature>
<feature type="topological domain" description="Cytoplasmic" evidence="3">
    <location>
        <begin position="641"/>
        <end position="796"/>
    </location>
</feature>
<feature type="domain" description="Cadherin 1" evidence="4">
    <location>
        <begin position="54"/>
        <end position="159"/>
    </location>
</feature>
<feature type="domain" description="Cadherin 2" evidence="4">
    <location>
        <begin position="160"/>
        <end position="268"/>
    </location>
</feature>
<feature type="domain" description="Cadherin 3" evidence="4">
    <location>
        <begin position="269"/>
        <end position="383"/>
    </location>
</feature>
<feature type="domain" description="Cadherin 4" evidence="4">
    <location>
        <begin position="384"/>
        <end position="486"/>
    </location>
</feature>
<feature type="domain" description="Cadherin 5" evidence="4">
    <location>
        <begin position="487"/>
        <end position="612"/>
    </location>
</feature>
<feature type="modified residue" description="Phosphoserine" evidence="7">
    <location>
        <position position="788"/>
    </location>
</feature>
<feature type="modified residue" description="Phosphothreonine" evidence="7">
    <location>
        <position position="791"/>
    </location>
</feature>
<feature type="glycosylation site" description="N-linked (GlcNAc...) asparagine" evidence="3">
    <location>
        <position position="455"/>
    </location>
</feature>
<feature type="glycosylation site" description="N-linked (GlcNAc...) asparagine" evidence="3">
    <location>
        <position position="540"/>
    </location>
</feature>
<feature type="sequence conflict" description="In Ref. 1; CAA54674." evidence="6" ref="1">
    <original>E</original>
    <variation>D</variation>
    <location>
        <position position="462"/>
    </location>
</feature>
<feature type="sequence conflict" description="In Ref. 2; BAA06730." evidence="6" ref="2">
    <original>T</original>
    <variation>L</variation>
    <location>
        <position position="589"/>
    </location>
</feature>
<feature type="sequence conflict" description="In Ref. 2; BAA06730." evidence="6" ref="2">
    <original>D</original>
    <variation>N</variation>
    <location>
        <position position="655"/>
    </location>
</feature>
<feature type="sequence conflict" description="In Ref. 1; CAA54674." evidence="6" ref="1">
    <original>V</original>
    <variation>M</variation>
    <location>
        <position position="751"/>
    </location>
</feature>
<feature type="sequence conflict" description="In Ref. 2; BAA06730." evidence="6" ref="2">
    <original>P</original>
    <variation>Q</variation>
    <location>
        <position position="777"/>
    </location>
</feature>
<feature type="sequence conflict" description="In Ref. 2; BAA06730." evidence="6" ref="2">
    <original>L</original>
    <variation>P</variation>
    <location>
        <position position="782"/>
    </location>
</feature>
<feature type="strand" evidence="8">
    <location>
        <begin position="59"/>
        <end position="63"/>
    </location>
</feature>
<feature type="helix" evidence="8">
    <location>
        <begin position="64"/>
        <end position="66"/>
    </location>
</feature>
<feature type="strand" evidence="8">
    <location>
        <begin position="68"/>
        <end position="70"/>
    </location>
</feature>
<feature type="strand" evidence="8">
    <location>
        <begin position="72"/>
        <end position="76"/>
    </location>
</feature>
<feature type="strand" evidence="8">
    <location>
        <begin position="84"/>
        <end position="86"/>
    </location>
</feature>
<feature type="strand" evidence="8">
    <location>
        <begin position="88"/>
        <end position="94"/>
    </location>
</feature>
<feature type="turn" evidence="8">
    <location>
        <begin position="98"/>
        <end position="100"/>
    </location>
</feature>
<feature type="strand" evidence="8">
    <location>
        <begin position="101"/>
        <end position="103"/>
    </location>
</feature>
<feature type="turn" evidence="8">
    <location>
        <begin position="105"/>
        <end position="107"/>
    </location>
</feature>
<feature type="strand" evidence="8">
    <location>
        <begin position="109"/>
        <end position="112"/>
    </location>
</feature>
<feature type="turn" evidence="8">
    <location>
        <begin position="118"/>
        <end position="120"/>
    </location>
</feature>
<feature type="strand" evidence="8">
    <location>
        <begin position="122"/>
        <end position="132"/>
    </location>
</feature>
<feature type="turn" evidence="8">
    <location>
        <begin position="133"/>
        <end position="135"/>
    </location>
</feature>
<feature type="strand" evidence="8">
    <location>
        <begin position="138"/>
        <end position="140"/>
    </location>
</feature>
<feature type="strand" evidence="8">
    <location>
        <begin position="143"/>
        <end position="150"/>
    </location>
</feature>
<feature type="strand" evidence="9">
    <location>
        <begin position="158"/>
        <end position="169"/>
    </location>
</feature>
<feature type="strand" evidence="9">
    <location>
        <begin position="177"/>
        <end position="180"/>
    </location>
</feature>
<feature type="turn" evidence="9">
    <location>
        <begin position="189"/>
        <end position="191"/>
    </location>
</feature>
<feature type="strand" evidence="9">
    <location>
        <begin position="193"/>
        <end position="195"/>
    </location>
</feature>
<feature type="strand" evidence="9">
    <location>
        <begin position="198"/>
        <end position="204"/>
    </location>
</feature>
<feature type="turn" evidence="9">
    <location>
        <begin position="205"/>
        <end position="207"/>
    </location>
</feature>
<feature type="strand" evidence="9">
    <location>
        <begin position="208"/>
        <end position="210"/>
    </location>
</feature>
<feature type="turn" evidence="9">
    <location>
        <begin position="212"/>
        <end position="214"/>
    </location>
</feature>
<feature type="strand" evidence="9">
    <location>
        <begin position="216"/>
        <end position="219"/>
    </location>
</feature>
<feature type="strand" evidence="9">
    <location>
        <begin position="226"/>
        <end position="228"/>
    </location>
</feature>
<feature type="strand" evidence="9">
    <location>
        <begin position="230"/>
        <end position="239"/>
    </location>
</feature>
<feature type="turn" evidence="9">
    <location>
        <begin position="240"/>
        <end position="243"/>
    </location>
</feature>
<feature type="strand" evidence="9">
    <location>
        <begin position="249"/>
        <end position="259"/>
    </location>
</feature>
<accession>P55288</accession>
<keyword id="KW-0002">3D-structure</keyword>
<keyword id="KW-0106">Calcium</keyword>
<keyword id="KW-0130">Cell adhesion</keyword>
<keyword id="KW-1003">Cell membrane</keyword>
<keyword id="KW-0165">Cleavage on pair of basic residues</keyword>
<keyword id="KW-0325">Glycoprotein</keyword>
<keyword id="KW-0472">Membrane</keyword>
<keyword id="KW-0479">Metal-binding</keyword>
<keyword id="KW-0597">Phosphoprotein</keyword>
<keyword id="KW-1185">Reference proteome</keyword>
<keyword id="KW-0677">Repeat</keyword>
<keyword id="KW-0732">Signal</keyword>
<keyword id="KW-0812">Transmembrane</keyword>
<keyword id="KW-1133">Transmembrane helix</keyword>
<sequence length="796" mass="88112">MKENYCLQAALVCLSMLYHSQAFALERRSHLHPSFHGHHEKGKEGQVLQRSKRGWVWNQFFVIEEYTGPDPVLVGRLHSDIDSGDGNIKYILSGEGAGTIFVIDDKSGNIHATKTLDREERAQYTLMAQAVDRDTNRPLEPPSEFIVKVQDINDNPPEFLHEIYHANVPERSNVGTSVIQVTASDADDPTYGNSAKLVYSILEGQPYFSVEAQTGIIRTALPNMDREAKEEYHVVIQAKDMGGHMGGLSGTTKVTITLTDVNDNPPKFPQSVYQMSVSEAAVPGEEVGRVKAKDPDIGENGLVTYNIVDGDGIELFEITTDYETQDGVVKLKKPVDFETKRAYSLKIEAANVHIDPKFISNGPFKDTVTVKISVEDADEPPMFLAPSYIHEVQENAAAGTVVGRVHAKDPDAANSPIRYSIDRHTDLDRFFTINPEDGFIKTTKPLDREETAWLNISVFAAEIHNRHQETKVPVAIRVLDVNDNAPKFAAPYEGFICESDHPKALSNQPIVTVSADDQDDTANGPRFIFSLPPEIMHNPNFTVRDNRDNTAGVYARRGGFSRQKQDFYLLPIVISDGGIPPMSSTNTLTIKVCGCDVNGALLSCNAEAYILNAGLSTGALIAILACIVILLVIVVLFVTLRRQKKEPLIVFEEEDVRENIITYDDEGGGEEDTEAFDIATLQNPDGINGFIPRKDIKPEYQYMPRPGLRPAPNSVDVDDFINTRIQEADNDPTAPPYDSIQIYGYEGRGSVAGSLSSLESATTDSDLDYDYLQNWGPRFKKLADLYGSKDTFDDDS</sequence>
<reference key="1">
    <citation type="journal article" date="1995" name="Dev. Biol.">
        <title>Cloning and expression analysis of a novel mesodermally expressed cadherin.</title>
        <authorList>
            <person name="Hoffmann I.H."/>
            <person name="Balling R."/>
        </authorList>
    </citation>
    <scope>NUCLEOTIDE SEQUENCE [MRNA]</scope>
</reference>
<reference key="2">
    <citation type="journal article" date="1995" name="Dev. Biol.">
        <title>Cadherin-11 expressed in association with mesenchymal morphogenesis in the head, somite, and limb bud of early mouse embryos.</title>
        <authorList>
            <person name="Kimura Y."/>
            <person name="Matsunami H."/>
            <person name="Inoue T."/>
            <person name="Shimamura K."/>
            <person name="Uchida N."/>
            <person name="Ueno T."/>
            <person name="Miyazaki T."/>
            <person name="Takeichi M."/>
        </authorList>
    </citation>
    <scope>NUCLEOTIDE SEQUENCE [MRNA]</scope>
</reference>
<reference key="3">
    <citation type="journal article" date="1994" name="J. Biol. Chem.">
        <title>Molecular cloning and characterization of OB-cadherin, a new member of cadherin family expressed in osteoblasts.</title>
        <authorList>
            <person name="Okazaki M."/>
            <person name="Takeshita S."/>
            <person name="Kawai S."/>
            <person name="Kikuno R."/>
            <person name="Tsujimura A."/>
            <person name="Kudo A."/>
            <person name="Amann E."/>
        </authorList>
    </citation>
    <scope>NUCLEOTIDE SEQUENCE [MRNA]</scope>
    <source>
        <strain>C57BL/6J</strain>
        <tissue>Calvaria</tissue>
    </source>
</reference>
<reference key="4">
    <citation type="journal article" date="2004" name="Genome Res.">
        <title>The status, quality, and expansion of the NIH full-length cDNA project: the Mammalian Gene Collection (MGC).</title>
        <authorList>
            <consortium name="The MGC Project Team"/>
        </authorList>
    </citation>
    <scope>NUCLEOTIDE SEQUENCE [LARGE SCALE MRNA]</scope>
    <source>
        <tissue>Olfactory epithelium</tissue>
    </source>
</reference>
<reference key="5">
    <citation type="journal article" date="1996" name="Biol. Reprod.">
        <title>A comprehensive survey of the cadherins expressed in the testes of fetal, immature, and adult mice utilizing the polymerase chain reaction.</title>
        <authorList>
            <person name="Munro S.B."/>
            <person name="Blaschuk O.W."/>
        </authorList>
    </citation>
    <scope>DEVELOPMENTAL STAGE</scope>
    <source>
        <strain>C57BL/6J</strain>
        <tissue>Testis</tissue>
    </source>
</reference>
<reference key="6">
    <citation type="journal article" date="2010" name="Cell">
        <title>A tissue-specific atlas of mouse protein phosphorylation and expression.</title>
        <authorList>
            <person name="Huttlin E.L."/>
            <person name="Jedrychowski M.P."/>
            <person name="Elias J.E."/>
            <person name="Goswami T."/>
            <person name="Rad R."/>
            <person name="Beausoleil S.A."/>
            <person name="Villen J."/>
            <person name="Haas W."/>
            <person name="Sowa M.E."/>
            <person name="Gygi S.P."/>
        </authorList>
    </citation>
    <scope>PHOSPHORYLATION [LARGE SCALE ANALYSIS] AT SER-788 AND THR-791</scope>
    <scope>IDENTIFICATION BY MASS SPECTROMETRY [LARGE SCALE ANALYSIS]</scope>
    <source>
        <tissue>Brain</tissue>
        <tissue>Kidney</tissue>
        <tissue>Lung</tissue>
        <tissue>Spleen</tissue>
    </source>
</reference>
<dbReference type="EMBL" id="X77557">
    <property type="protein sequence ID" value="CAA54674.1"/>
    <property type="molecule type" value="mRNA"/>
</dbReference>
<dbReference type="EMBL" id="D31963">
    <property type="protein sequence ID" value="BAA06730.1"/>
    <property type="molecule type" value="mRNA"/>
</dbReference>
<dbReference type="EMBL" id="D21253">
    <property type="protein sequence ID" value="BAA04797.1"/>
    <property type="molecule type" value="mRNA"/>
</dbReference>
<dbReference type="EMBL" id="BC046314">
    <property type="protein sequence ID" value="AAH46314.1"/>
    <property type="molecule type" value="mRNA"/>
</dbReference>
<dbReference type="CCDS" id="CCDS22571.1"/>
<dbReference type="PIR" id="A53584">
    <property type="entry name" value="A53584"/>
</dbReference>
<dbReference type="PIR" id="I48277">
    <property type="entry name" value="I48277"/>
</dbReference>
<dbReference type="PIR" id="I49556">
    <property type="entry name" value="I49556"/>
</dbReference>
<dbReference type="RefSeq" id="NP_001403376.1">
    <property type="nucleotide sequence ID" value="NM_001416447.1"/>
</dbReference>
<dbReference type="RefSeq" id="NP_033996.4">
    <property type="nucleotide sequence ID" value="NM_009866.5"/>
</dbReference>
<dbReference type="RefSeq" id="XP_006530686.1">
    <property type="nucleotide sequence ID" value="XM_006530623.3"/>
</dbReference>
<dbReference type="RefSeq" id="XP_006530687.1">
    <property type="nucleotide sequence ID" value="XM_006530624.3"/>
</dbReference>
<dbReference type="RefSeq" id="XP_006530689.1">
    <property type="nucleotide sequence ID" value="XM_006530626.3"/>
</dbReference>
<dbReference type="RefSeq" id="XP_030099132.1">
    <property type="nucleotide sequence ID" value="XM_030243272.2"/>
</dbReference>
<dbReference type="PDB" id="2A4C">
    <property type="method" value="X-ray"/>
    <property type="resolution" value="2.90 A"/>
    <property type="chains" value="A/B=54-151"/>
</dbReference>
<dbReference type="PDB" id="2A4E">
    <property type="method" value="X-ray"/>
    <property type="resolution" value="3.20 A"/>
    <property type="chains" value="A=54-260"/>
</dbReference>
<dbReference type="PDB" id="6CGB">
    <property type="method" value="X-ray"/>
    <property type="resolution" value="2.99 A"/>
    <property type="chains" value="A=54-155"/>
</dbReference>
<dbReference type="PDBsum" id="2A4C"/>
<dbReference type="PDBsum" id="2A4E"/>
<dbReference type="PDBsum" id="6CGB"/>
<dbReference type="SMR" id="P55288"/>
<dbReference type="BioGRID" id="198632">
    <property type="interactions" value="4"/>
</dbReference>
<dbReference type="DIP" id="DIP-59088N"/>
<dbReference type="FunCoup" id="P55288">
    <property type="interactions" value="450"/>
</dbReference>
<dbReference type="IntAct" id="P55288">
    <property type="interactions" value="3"/>
</dbReference>
<dbReference type="MINT" id="P55288"/>
<dbReference type="STRING" id="10090.ENSMUSP00000074681"/>
<dbReference type="ChEMBL" id="CHEMBL2163173"/>
<dbReference type="GlyConnect" id="2164">
    <property type="glycosylation" value="5 N-Linked glycans (1 site)"/>
</dbReference>
<dbReference type="GlyCosmos" id="P55288">
    <property type="glycosylation" value="2 sites, 5 glycans"/>
</dbReference>
<dbReference type="GlyGen" id="P55288">
    <property type="glycosylation" value="2 sites, 7 N-linked glycans (2 sites)"/>
</dbReference>
<dbReference type="iPTMnet" id="P55288"/>
<dbReference type="PhosphoSitePlus" id="P55288"/>
<dbReference type="SwissPalm" id="P55288"/>
<dbReference type="jPOST" id="P55288"/>
<dbReference type="PaxDb" id="10090-ENSMUSP00000074681"/>
<dbReference type="PeptideAtlas" id="P55288"/>
<dbReference type="ProteomicsDB" id="265493"/>
<dbReference type="Pumba" id="P55288"/>
<dbReference type="Antibodypedia" id="4584">
    <property type="antibodies" value="846 antibodies from 38 providers"/>
</dbReference>
<dbReference type="DNASU" id="12552"/>
<dbReference type="Ensembl" id="ENSMUST00000075190.5">
    <property type="protein sequence ID" value="ENSMUSP00000074681.4"/>
    <property type="gene ID" value="ENSMUSG00000031673.7"/>
</dbReference>
<dbReference type="GeneID" id="12552"/>
<dbReference type="KEGG" id="mmu:12552"/>
<dbReference type="UCSC" id="uc009mzu.1">
    <property type="organism name" value="mouse"/>
</dbReference>
<dbReference type="AGR" id="MGI:99217"/>
<dbReference type="CTD" id="1009"/>
<dbReference type="MGI" id="MGI:99217">
    <property type="gene designation" value="Cdh11"/>
</dbReference>
<dbReference type="VEuPathDB" id="HostDB:ENSMUSG00000031673"/>
<dbReference type="eggNOG" id="KOG3594">
    <property type="taxonomic scope" value="Eukaryota"/>
</dbReference>
<dbReference type="GeneTree" id="ENSGT00940000153691"/>
<dbReference type="HOGENOM" id="CLU_005284_3_1_1"/>
<dbReference type="InParanoid" id="P55288"/>
<dbReference type="OMA" id="ERYFVIN"/>
<dbReference type="OrthoDB" id="8188793at2759"/>
<dbReference type="PhylomeDB" id="P55288"/>
<dbReference type="TreeFam" id="TF329887"/>
<dbReference type="Reactome" id="R-MMU-418990">
    <property type="pathway name" value="Adherens junctions interactions"/>
</dbReference>
<dbReference type="Reactome" id="R-MMU-9762292">
    <property type="pathway name" value="Regulation of CDH11 function"/>
</dbReference>
<dbReference type="BioGRID-ORCS" id="12552">
    <property type="hits" value="5 hits in 79 CRISPR screens"/>
</dbReference>
<dbReference type="CD-CODE" id="CE726F99">
    <property type="entry name" value="Postsynaptic density"/>
</dbReference>
<dbReference type="ChiTaRS" id="Cdh11">
    <property type="organism name" value="mouse"/>
</dbReference>
<dbReference type="EvolutionaryTrace" id="P55288"/>
<dbReference type="PRO" id="PR:P55288"/>
<dbReference type="Proteomes" id="UP000000589">
    <property type="component" value="Chromosome 8"/>
</dbReference>
<dbReference type="RNAct" id="P55288">
    <property type="molecule type" value="protein"/>
</dbReference>
<dbReference type="Bgee" id="ENSMUSG00000031673">
    <property type="expression patterns" value="Expressed in vault of skull and 290 other cell types or tissues"/>
</dbReference>
<dbReference type="GO" id="GO:0005737">
    <property type="term" value="C:cytoplasm"/>
    <property type="evidence" value="ECO:0000314"/>
    <property type="project" value="MGI"/>
</dbReference>
<dbReference type="GO" id="GO:0098978">
    <property type="term" value="C:glutamatergic synapse"/>
    <property type="evidence" value="ECO:0000314"/>
    <property type="project" value="SynGO"/>
</dbReference>
<dbReference type="GO" id="GO:0005886">
    <property type="term" value="C:plasma membrane"/>
    <property type="evidence" value="ECO:0000314"/>
    <property type="project" value="MGI"/>
</dbReference>
<dbReference type="GO" id="GO:0098685">
    <property type="term" value="C:Schaffer collateral - CA1 synapse"/>
    <property type="evidence" value="ECO:0000314"/>
    <property type="project" value="SynGO"/>
</dbReference>
<dbReference type="GO" id="GO:0045202">
    <property type="term" value="C:synapse"/>
    <property type="evidence" value="ECO:0000314"/>
    <property type="project" value="SynGO"/>
</dbReference>
<dbReference type="GO" id="GO:0005509">
    <property type="term" value="F:calcium ion binding"/>
    <property type="evidence" value="ECO:0007669"/>
    <property type="project" value="InterPro"/>
</dbReference>
<dbReference type="GO" id="GO:0031589">
    <property type="term" value="P:cell-substrate adhesion"/>
    <property type="evidence" value="ECO:0000250"/>
    <property type="project" value="UniProtKB"/>
</dbReference>
<dbReference type="GO" id="GO:0021957">
    <property type="term" value="P:corticospinal tract morphogenesis"/>
    <property type="evidence" value="ECO:0000316"/>
    <property type="project" value="MGI"/>
</dbReference>
<dbReference type="GO" id="GO:0048041">
    <property type="term" value="P:focal adhesion assembly"/>
    <property type="evidence" value="ECO:0007669"/>
    <property type="project" value="Ensembl"/>
</dbReference>
<dbReference type="GO" id="GO:0007156">
    <property type="term" value="P:homophilic cell adhesion via plasma membrane adhesion molecules"/>
    <property type="evidence" value="ECO:0007669"/>
    <property type="project" value="InterPro"/>
</dbReference>
<dbReference type="GO" id="GO:0050804">
    <property type="term" value="P:modulation of chemical synaptic transmission"/>
    <property type="evidence" value="ECO:0000314"/>
    <property type="project" value="SynGO"/>
</dbReference>
<dbReference type="GO" id="GO:0030336">
    <property type="term" value="P:negative regulation of cell migration"/>
    <property type="evidence" value="ECO:0000250"/>
    <property type="project" value="UniProtKB"/>
</dbReference>
<dbReference type="CDD" id="cd11304">
    <property type="entry name" value="Cadherin_repeat"/>
    <property type="match status" value="4"/>
</dbReference>
<dbReference type="FunFam" id="4.10.900.10:FF:000001">
    <property type="entry name" value="Cadherin 2"/>
    <property type="match status" value="1"/>
</dbReference>
<dbReference type="FunFam" id="2.60.40.60:FF:000008">
    <property type="entry name" value="Cadherin 24"/>
    <property type="match status" value="1"/>
</dbReference>
<dbReference type="FunFam" id="2.60.40.60:FF:000009">
    <property type="entry name" value="Cadherin 24"/>
    <property type="match status" value="1"/>
</dbReference>
<dbReference type="FunFam" id="2.60.40.60:FF:000012">
    <property type="entry name" value="Cadherin 24"/>
    <property type="match status" value="1"/>
</dbReference>
<dbReference type="FunFam" id="2.60.40.60:FF:000017">
    <property type="entry name" value="Cadherin 24"/>
    <property type="match status" value="1"/>
</dbReference>
<dbReference type="FunFam" id="2.60.40.60:FF:000014">
    <property type="entry name" value="Cadherin 8"/>
    <property type="match status" value="1"/>
</dbReference>
<dbReference type="Gene3D" id="2.60.40.60">
    <property type="entry name" value="Cadherins"/>
    <property type="match status" value="5"/>
</dbReference>
<dbReference type="Gene3D" id="4.10.900.10">
    <property type="entry name" value="TCF3-CBD (Catenin binding domain)"/>
    <property type="match status" value="1"/>
</dbReference>
<dbReference type="InterPro" id="IPR039808">
    <property type="entry name" value="Cadherin"/>
</dbReference>
<dbReference type="InterPro" id="IPR002126">
    <property type="entry name" value="Cadherin-like_dom"/>
</dbReference>
<dbReference type="InterPro" id="IPR015919">
    <property type="entry name" value="Cadherin-like_sf"/>
</dbReference>
<dbReference type="InterPro" id="IPR020894">
    <property type="entry name" value="Cadherin_CS"/>
</dbReference>
<dbReference type="InterPro" id="IPR000233">
    <property type="entry name" value="Cadherin_Y-type_LIR"/>
</dbReference>
<dbReference type="InterPro" id="IPR027397">
    <property type="entry name" value="Catenin-bd_sf"/>
</dbReference>
<dbReference type="PANTHER" id="PTHR24027:SF85">
    <property type="entry name" value="CADHERIN-11"/>
    <property type="match status" value="1"/>
</dbReference>
<dbReference type="PANTHER" id="PTHR24027">
    <property type="entry name" value="CADHERIN-23"/>
    <property type="match status" value="1"/>
</dbReference>
<dbReference type="Pfam" id="PF01049">
    <property type="entry name" value="CADH_Y-type_LIR"/>
    <property type="match status" value="1"/>
</dbReference>
<dbReference type="Pfam" id="PF00028">
    <property type="entry name" value="Cadherin"/>
    <property type="match status" value="4"/>
</dbReference>
<dbReference type="PRINTS" id="PR00205">
    <property type="entry name" value="CADHERIN"/>
</dbReference>
<dbReference type="SMART" id="SM00112">
    <property type="entry name" value="CA"/>
    <property type="match status" value="5"/>
</dbReference>
<dbReference type="SUPFAM" id="SSF49313">
    <property type="entry name" value="Cadherin-like"/>
    <property type="match status" value="5"/>
</dbReference>
<dbReference type="PROSITE" id="PS00232">
    <property type="entry name" value="CADHERIN_1"/>
    <property type="match status" value="3"/>
</dbReference>
<dbReference type="PROSITE" id="PS50268">
    <property type="entry name" value="CADHERIN_2"/>
    <property type="match status" value="5"/>
</dbReference>
<proteinExistence type="evidence at protein level"/>
<gene>
    <name type="primary">Cdh11</name>
    <name type="synonym">Cad-11</name>
</gene>